<proteinExistence type="inferred from homology"/>
<organismHost>
    <name type="scientific">Canis lupus familiaris</name>
    <name type="common">Dog</name>
    <name type="synonym">Canis familiaris</name>
    <dbReference type="NCBI Taxonomy" id="9615"/>
</organismHost>
<gene>
    <name evidence="1" type="primary">L1</name>
</gene>
<sequence>MAVWLPAQNKFYLPPQPSTKVLSTDEYVSRTNIFYHASSERLLTVGHPFYEIYKEERSEEVIVPKVSPNQYRVFRLLLPDPNNFAFGDKSLFDPEKERLVWGLRGLEIGRGQPLGISVTGHPTFDRYNDVENPNKNLAGHGGGTDSRVNMGLDPKQTQMFMIGCKPALGEHWSLTRWCTGQVHTAGQCPPIELRNTTIEDGDMVDIGFGAMDFKALQHYKSGVPIDIVNSACKYPDYLKMANEPYGDRCFFFVRREQLYARHIMSRSGTQGLEPVPKDTYATREDNNIGTTNYFSTPSGSLVSSEGQLFNRPYWIQRSQGKNNGIAWGNQLFLTVVDNTRGTPLTINIGQQDKPEEGNYVPSSYRTYLRHVEEYEVSIIVQLCKVKLSPENLAIIHTMDPNIIEDWHLNVTPPSGTLDDTYRYINSLATKCPTNIPPKTNVDPFADFKFWEVDLKDKMTEQLDQTPLGRKFLFQTNVLRPRSVKVRSTSHVSVKRKAVKRKRK</sequence>
<dbReference type="EMBL" id="D55633">
    <property type="protein sequence ID" value="BAA09503.1"/>
    <property type="molecule type" value="Genomic_DNA"/>
</dbReference>
<dbReference type="EMBL" id="D26115">
    <property type="protein sequence ID" value="BAA05111.1"/>
    <property type="molecule type" value="Genomic_DNA"/>
</dbReference>
<dbReference type="EMBL" id="L22695">
    <property type="protein sequence ID" value="AAA61750.1"/>
    <property type="molecule type" value="Genomic_DNA"/>
</dbReference>
<dbReference type="RefSeq" id="NP_056819.1">
    <property type="nucleotide sequence ID" value="NC_001619.1"/>
</dbReference>
<dbReference type="SMR" id="Q89828"/>
<dbReference type="GeneID" id="1497245"/>
<dbReference type="KEGG" id="vg:1497245"/>
<dbReference type="Proteomes" id="UP000008788">
    <property type="component" value="Segment"/>
</dbReference>
<dbReference type="Proteomes" id="UP000097271">
    <property type="component" value="Genome"/>
</dbReference>
<dbReference type="GO" id="GO:0042025">
    <property type="term" value="C:host cell nucleus"/>
    <property type="evidence" value="ECO:0007669"/>
    <property type="project" value="UniProtKB-SubCell"/>
</dbReference>
<dbReference type="GO" id="GO:0039620">
    <property type="term" value="C:T=7 icosahedral viral capsid"/>
    <property type="evidence" value="ECO:0007669"/>
    <property type="project" value="UniProtKB-UniRule"/>
</dbReference>
<dbReference type="GO" id="GO:0005198">
    <property type="term" value="F:structural molecule activity"/>
    <property type="evidence" value="ECO:0007669"/>
    <property type="project" value="UniProtKB-UniRule"/>
</dbReference>
<dbReference type="GO" id="GO:0075509">
    <property type="term" value="P:endocytosis involved in viral entry into host cell"/>
    <property type="evidence" value="ECO:0007669"/>
    <property type="project" value="UniProtKB-KW"/>
</dbReference>
<dbReference type="GO" id="GO:0019062">
    <property type="term" value="P:virion attachment to host cell"/>
    <property type="evidence" value="ECO:0007669"/>
    <property type="project" value="UniProtKB-UniRule"/>
</dbReference>
<dbReference type="Gene3D" id="2.60.175.20">
    <property type="entry name" value="Major capsid L1 (late) superfamily, Papillomavirus"/>
    <property type="match status" value="2"/>
</dbReference>
<dbReference type="HAMAP" id="MF_04002">
    <property type="entry name" value="PPV_L1"/>
    <property type="match status" value="1"/>
</dbReference>
<dbReference type="InterPro" id="IPR002210">
    <property type="entry name" value="Capsid_L1_Papillomavir"/>
</dbReference>
<dbReference type="InterPro" id="IPR036973">
    <property type="entry name" value="Capsid_L1_sf_Papillomavir"/>
</dbReference>
<dbReference type="InterPro" id="IPR011222">
    <property type="entry name" value="dsDNA_vir_gr_I_capsid"/>
</dbReference>
<dbReference type="Pfam" id="PF00500">
    <property type="entry name" value="Late_protein_L1"/>
    <property type="match status" value="1"/>
</dbReference>
<dbReference type="PRINTS" id="PR00865">
    <property type="entry name" value="HPVCAPSIDL1"/>
</dbReference>
<dbReference type="SUPFAM" id="SSF88648">
    <property type="entry name" value="Group I dsDNA viruses"/>
    <property type="match status" value="1"/>
</dbReference>
<feature type="chain" id="PRO_0000133555" description="Major capsid protein L1">
    <location>
        <begin position="1"/>
        <end position="503"/>
    </location>
</feature>
<feature type="region of interest" description="Disordered" evidence="2">
    <location>
        <begin position="270"/>
        <end position="289"/>
    </location>
</feature>
<feature type="disulfide bond" description="Interchain (with C-431)" evidence="1">
    <location>
        <position position="178"/>
    </location>
</feature>
<feature type="disulfide bond" description="Interchain (with C-178)" evidence="1">
    <location>
        <position position="431"/>
    </location>
</feature>
<evidence type="ECO:0000255" key="1">
    <source>
        <dbReference type="HAMAP-Rule" id="MF_04002"/>
    </source>
</evidence>
<evidence type="ECO:0000256" key="2">
    <source>
        <dbReference type="SAM" id="MobiDB-lite"/>
    </source>
</evidence>
<reference key="1">
    <citation type="journal article" date="1994" name="Gene">
        <title>Cloning and sequencing of the L1 gene of canine oral papillomavirus.</title>
        <authorList>
            <person name="Isegawa N."/>
            <person name="Nakano K."/>
            <person name="Ohta M."/>
            <person name="Shirasawa H."/>
            <person name="Tokita H."/>
            <person name="Simizu B."/>
        </authorList>
    </citation>
    <scope>NUCLEOTIDE SEQUENCE [GENOMIC DNA]</scope>
</reference>
<reference key="2">
    <citation type="journal article" date="1994" name="Virology">
        <title>Canine oral papillomavirus genomic sequence: a unique 1.5-kb intervening sequence between the E2 and L2 open reading frames.</title>
        <authorList>
            <person name="Delius H."/>
            <person name="van Ranst M.A."/>
            <person name="Jenson A.B."/>
            <person name="zur Hausen H."/>
            <person name="Sundberg J.P."/>
        </authorList>
    </citation>
    <scope>NUCLEOTIDE SEQUENCE [GENOMIC DNA]</scope>
</reference>
<reference key="3">
    <citation type="journal article" date="1995" name="Int. J. Oncol.">
        <title>Nucleotide sequence of a canine oral papillomavirus containing a long noncoding region.</title>
        <authorList>
            <person name="Isegawa N."/>
            <person name="Ohta M."/>
            <person name="Shirasawa H."/>
            <person name="Tokita H."/>
            <person name="Simizu B."/>
            <person name="Yamaura A."/>
        </authorList>
    </citation>
    <scope>NUCLEOTIDE SEQUENCE [GENOMIC DNA]</scope>
</reference>
<keyword id="KW-0167">Capsid protein</keyword>
<keyword id="KW-1015">Disulfide bond</keyword>
<keyword id="KW-1048">Host nucleus</keyword>
<keyword id="KW-0945">Host-virus interaction</keyword>
<keyword id="KW-0426">Late protein</keyword>
<keyword id="KW-1185">Reference proteome</keyword>
<keyword id="KW-1145">T=7 icosahedral capsid protein</keyword>
<keyword id="KW-1161">Viral attachment to host cell</keyword>
<keyword id="KW-1162">Viral penetration into host cytoplasm</keyword>
<keyword id="KW-0946">Virion</keyword>
<keyword id="KW-1164">Virus endocytosis by host</keyword>
<keyword id="KW-1160">Virus entry into host cell</keyword>
<protein>
    <recommendedName>
        <fullName evidence="1">Major capsid protein L1</fullName>
    </recommendedName>
</protein>
<comment type="function">
    <text evidence="1">Forms an icosahedral capsid with a T=7 symmetry and a 50 nm diameter. The capsid is composed of 72 pentamers linked to each other by disulfide bonds and associated with L2 proteins. Binds to heparan sulfate proteoglycans on cell surface of basal layer keratinocytes to provide initial virion attachment. This binding mediates a conformational change in the virus capsid that facilitates efficient infection. The virion enters the host cell via endocytosis. During virus trafficking, L1 protein dissociates from the viral DNA and the genomic DNA is released to the host nucleus. The virion assembly takes place within the cell nucleus. Encapsulates the genomic DNA together with protein L2.</text>
</comment>
<comment type="subunit">
    <text evidence="1">Self-assembles into homopentamers. The capsid has an icosahedral symmetry and consists of 72 capsomers, with each capsomer being a pentamer of L1. Interacts with the minor capsid protein L2; this interaction is necessary for viral genome encapsidation. Interacts with protein E2; this interaction enhances E2-dependent replication and transcription activation.</text>
</comment>
<comment type="subcellular location">
    <subcellularLocation>
        <location evidence="1">Virion</location>
    </subcellularLocation>
    <subcellularLocation>
        <location evidence="1">Host nucleus</location>
    </subcellularLocation>
</comment>
<comment type="similarity">
    <text evidence="1">Belongs to the papillomaviridae L1 protein family.</text>
</comment>
<name>VL1_COPV6</name>
<accession>Q89828</accession>
<organism>
    <name type="scientific">Canine oral papillomavirus (strain Y62)</name>
    <name type="common">COPV</name>
    <dbReference type="NCBI Taxonomy" id="766192"/>
    <lineage>
        <taxon>Viruses</taxon>
        <taxon>Monodnaviria</taxon>
        <taxon>Shotokuvirae</taxon>
        <taxon>Cossaviricota</taxon>
        <taxon>Papovaviricetes</taxon>
        <taxon>Zurhausenvirales</taxon>
        <taxon>Papillomaviridae</taxon>
        <taxon>Firstpapillomavirinae</taxon>
        <taxon>Lambdapapillomavirus</taxon>
        <taxon>Canine oral papillomavirus</taxon>
    </lineage>
</organism>